<comment type="subunit">
    <text evidence="1">Homotetramer.</text>
</comment>
<comment type="subcellular location">
    <subcellularLocation>
        <location evidence="4">Cellular thylakoid membrane</location>
        <topology evidence="4">Peripheral membrane protein</topology>
        <orientation evidence="4">Cytoplasmic side</orientation>
    </subcellularLocation>
</comment>
<dbReference type="EMBL" id="BA000022">
    <property type="protein sequence ID" value="BAA17171.1"/>
    <property type="molecule type" value="Genomic_DNA"/>
</dbReference>
<dbReference type="PIR" id="S75257">
    <property type="entry name" value="S75257"/>
</dbReference>
<dbReference type="SMR" id="P73145"/>
<dbReference type="IntAct" id="P73145">
    <property type="interactions" value="2"/>
</dbReference>
<dbReference type="STRING" id="1148.gene:10498034"/>
<dbReference type="PaxDb" id="1148-1652248"/>
<dbReference type="EnsemblBacteria" id="BAA17171">
    <property type="protein sequence ID" value="BAA17171"/>
    <property type="gene ID" value="BAA17171"/>
</dbReference>
<dbReference type="KEGG" id="syn:slr1034"/>
<dbReference type="eggNOG" id="COG0629">
    <property type="taxonomic scope" value="Bacteria"/>
</dbReference>
<dbReference type="InParanoid" id="P73145"/>
<dbReference type="PhylomeDB" id="P73145"/>
<dbReference type="Proteomes" id="UP000001425">
    <property type="component" value="Chromosome"/>
</dbReference>
<dbReference type="GO" id="GO:0009295">
    <property type="term" value="C:nucleoid"/>
    <property type="evidence" value="ECO:0000318"/>
    <property type="project" value="GO_Central"/>
</dbReference>
<dbReference type="GO" id="GO:0031676">
    <property type="term" value="C:plasma membrane-derived thylakoid membrane"/>
    <property type="evidence" value="ECO:0007669"/>
    <property type="project" value="UniProtKB-SubCell"/>
</dbReference>
<dbReference type="GO" id="GO:0008047">
    <property type="term" value="F:enzyme activator activity"/>
    <property type="evidence" value="ECO:0000318"/>
    <property type="project" value="GO_Central"/>
</dbReference>
<dbReference type="GO" id="GO:0003697">
    <property type="term" value="F:single-stranded DNA binding"/>
    <property type="evidence" value="ECO:0000318"/>
    <property type="project" value="GO_Central"/>
</dbReference>
<dbReference type="GO" id="GO:0006260">
    <property type="term" value="P:DNA replication"/>
    <property type="evidence" value="ECO:0000318"/>
    <property type="project" value="GO_Central"/>
</dbReference>
<dbReference type="CDD" id="cd04496">
    <property type="entry name" value="SSB_OBF"/>
    <property type="match status" value="1"/>
</dbReference>
<dbReference type="FunFam" id="2.40.50.140:FF:000592">
    <property type="entry name" value="Single-stranded DNA-binding protein"/>
    <property type="match status" value="1"/>
</dbReference>
<dbReference type="Gene3D" id="2.40.50.140">
    <property type="entry name" value="Nucleic acid-binding proteins"/>
    <property type="match status" value="1"/>
</dbReference>
<dbReference type="InterPro" id="IPR012340">
    <property type="entry name" value="NA-bd_OB-fold"/>
</dbReference>
<dbReference type="InterPro" id="IPR000424">
    <property type="entry name" value="Primosome_PriB/ssb"/>
</dbReference>
<dbReference type="Pfam" id="PF00436">
    <property type="entry name" value="SSB"/>
    <property type="match status" value="1"/>
</dbReference>
<dbReference type="SUPFAM" id="SSF50249">
    <property type="entry name" value="Nucleic acid-binding proteins"/>
    <property type="match status" value="1"/>
</dbReference>
<dbReference type="PROSITE" id="PS50935">
    <property type="entry name" value="SSB"/>
    <property type="match status" value="1"/>
</dbReference>
<proteinExistence type="evidence at protein level"/>
<organism>
    <name type="scientific">Synechocystis sp. (strain ATCC 27184 / PCC 6803 / Kazusa)</name>
    <dbReference type="NCBI Taxonomy" id="1111708"/>
    <lineage>
        <taxon>Bacteria</taxon>
        <taxon>Bacillati</taxon>
        <taxon>Cyanobacteriota</taxon>
        <taxon>Cyanophyceae</taxon>
        <taxon>Synechococcales</taxon>
        <taxon>Merismopediaceae</taxon>
        <taxon>Synechocystis</taxon>
    </lineage>
</organism>
<sequence>MNSFVLMATVIREPELRFTKENQTPVCEFLVEFPGMRDDSPKESLKVVGWGNLANTIKETYHPGDRLIIEGRLGMNMIERQEGFKEKRAELTASRISLVDSGNGINPGELSSPPEPEAVDLSNTDDIPF</sequence>
<gene>
    <name type="ordered locus">slr1034</name>
</gene>
<reference key="1">
    <citation type="journal article" date="1996" name="DNA Res.">
        <title>Sequence analysis of the genome of the unicellular cyanobacterium Synechocystis sp. strain PCC6803. II. Sequence determination of the entire genome and assignment of potential protein-coding regions.</title>
        <authorList>
            <person name="Kaneko T."/>
            <person name="Sato S."/>
            <person name="Kotani H."/>
            <person name="Tanaka A."/>
            <person name="Asamizu E."/>
            <person name="Nakamura Y."/>
            <person name="Miyajima N."/>
            <person name="Hirosawa M."/>
            <person name="Sugiura M."/>
            <person name="Sasamoto S."/>
            <person name="Kimura T."/>
            <person name="Hosouchi T."/>
            <person name="Matsuno A."/>
            <person name="Muraki A."/>
            <person name="Nakazaki N."/>
            <person name="Naruo K."/>
            <person name="Okumura S."/>
            <person name="Shimpo S."/>
            <person name="Takeuchi C."/>
            <person name="Wada T."/>
            <person name="Watanabe A."/>
            <person name="Yamada M."/>
            <person name="Yasuda M."/>
            <person name="Tabata S."/>
        </authorList>
    </citation>
    <scope>NUCLEOTIDE SEQUENCE [LARGE SCALE GENOMIC DNA]</scope>
    <source>
        <strain>ATCC 27184 / PCC 6803 / Kazusa</strain>
    </source>
</reference>
<reference key="2">
    <citation type="journal article" date="1997" name="Electrophoresis">
        <title>Towards a proteome project of cyanobacterium Synechocystis sp. strain PCC6803: linking 130 protein spots with their respective genes.</title>
        <authorList>
            <person name="Sazuka T."/>
            <person name="Ohara O."/>
        </authorList>
    </citation>
    <scope>PROTEIN SEQUENCE OF 1-20</scope>
</reference>
<reference key="3">
    <citation type="journal article" date="2005" name="Proteomics">
        <title>Proteomic studies of the thylakoid membrane of Synechocystis sp. PCC 6803.</title>
        <authorList>
            <person name="Srivastava R."/>
            <person name="Pisareva T."/>
            <person name="Norling B."/>
        </authorList>
    </citation>
    <scope>SUBCELLULAR LOCATION IN THYLAKOID</scope>
</reference>
<accession>P73145</accession>
<protein>
    <recommendedName>
        <fullName>Thylakoid-associated single-stranded DNA-binding protein slr1034</fullName>
        <shortName>Thylakoid-associated SSB</shortName>
    </recommendedName>
</protein>
<name>SSB2_SYNY3</name>
<feature type="chain" id="PRO_0000352738" description="Thylakoid-associated single-stranded DNA-binding protein slr1034">
    <location>
        <begin position="1"/>
        <end position="129"/>
    </location>
</feature>
<feature type="domain" description="SSB" evidence="2">
    <location>
        <begin position="1"/>
        <end position="100"/>
    </location>
</feature>
<feature type="region of interest" description="Disordered" evidence="3">
    <location>
        <begin position="99"/>
        <end position="129"/>
    </location>
</feature>
<evidence type="ECO:0000250" key="1"/>
<evidence type="ECO:0000255" key="2">
    <source>
        <dbReference type="PROSITE-ProRule" id="PRU00252"/>
    </source>
</evidence>
<evidence type="ECO:0000256" key="3">
    <source>
        <dbReference type="SAM" id="MobiDB-lite"/>
    </source>
</evidence>
<evidence type="ECO:0000305" key="4">
    <source>
    </source>
</evidence>
<keyword id="KW-0903">Direct protein sequencing</keyword>
<keyword id="KW-0238">DNA-binding</keyword>
<keyword id="KW-0472">Membrane</keyword>
<keyword id="KW-1185">Reference proteome</keyword>
<keyword id="KW-0793">Thylakoid</keyword>